<reference key="1">
    <citation type="submission" date="2005-02" db="EMBL/GenBank/DDBJ databases">
        <title>Molecular cloning and characterization of monkey aldehyde oxidase.</title>
        <authorList>
            <person name="Hoshino K."/>
        </authorList>
    </citation>
    <scope>NUCLEOTIDE SEQUENCE [MRNA]</scope>
    <source>
        <tissue>Liver</tissue>
    </source>
</reference>
<reference key="2">
    <citation type="journal article" date="2013" name="Cell. Mol. Life Sci.">
        <title>Structure and evolution of vertebrate aldehyde oxidases: from gene duplication to gene suppression.</title>
        <authorList>
            <person name="Kurosaki M."/>
            <person name="Bolis M."/>
            <person name="Fratelli M."/>
            <person name="Barzago M.M."/>
            <person name="Pattini L."/>
            <person name="Perretta G."/>
            <person name="Terao M."/>
            <person name="Garattini E."/>
        </authorList>
    </citation>
    <scope>NUCLEOTIDE SEQUENCE [MRNA]</scope>
    <scope>TISSUE SPECIFICITY</scope>
    <scope>IDENTIFICATION OF PARALOGS</scope>
</reference>
<accession>Q5FB27</accession>
<accession>D6BND8</accession>
<evidence type="ECO:0000250" key="1"/>
<evidence type="ECO:0000250" key="2">
    <source>
        <dbReference type="UniProtKB" id="O54754"/>
    </source>
</evidence>
<evidence type="ECO:0000250" key="3">
    <source>
        <dbReference type="UniProtKB" id="Q06278"/>
    </source>
</evidence>
<evidence type="ECO:0000255" key="4">
    <source>
        <dbReference type="PROSITE-ProRule" id="PRU00465"/>
    </source>
</evidence>
<evidence type="ECO:0000255" key="5">
    <source>
        <dbReference type="PROSITE-ProRule" id="PRU00718"/>
    </source>
</evidence>
<evidence type="ECO:0000269" key="6">
    <source>
    </source>
</evidence>
<evidence type="ECO:0000305" key="7"/>
<evidence type="ECO:0000305" key="8">
    <source>
    </source>
</evidence>
<protein>
    <recommendedName>
        <fullName>Aldehyde oxidase 1</fullName>
        <ecNumber evidence="2">1.2.3.1</ecNumber>
    </recommendedName>
    <alternativeName>
        <fullName>Azaheterocycle hydroxylase 1</fullName>
        <ecNumber>1.17.3.-</ecNumber>
    </alternativeName>
</protein>
<comment type="function">
    <text evidence="2">Oxidase with broad substrate specificity, oxidizing aromatic azaheterocycles, such as N1-methylnicotinamide, N-methylphthalazinium and phthalazine, as well as aldehydes, such as benzaldehyde, retinal, pyridoxal, and vanillin. Plays a key role in the metabolism of xenobiotics and drugs containing aromatic azaheterocyclic substituents. Participates in the bioactivation of prodrugs such as famciclovir, catalyzing the oxidation step from 6-deoxypenciclovir to penciclovir, which is a potent antiviral agent. Is probably involved in the regulation of reactive oxygen species homeostasis. May be a prominent source of superoxide generation via the one-electron reduction of molecular oxygen. May also catalyze nitric oxide (NO) production via the reduction of nitrite to NO with NADH or aldehyde as electron donor. May play a role in adipogenesis (By similarity).</text>
</comment>
<comment type="catalytic activity">
    <reaction evidence="2">
        <text>an aldehyde + O2 + H2O = a carboxylate + H2O2 + H(+)</text>
        <dbReference type="Rhea" id="RHEA:16829"/>
        <dbReference type="ChEBI" id="CHEBI:15377"/>
        <dbReference type="ChEBI" id="CHEBI:15378"/>
        <dbReference type="ChEBI" id="CHEBI:15379"/>
        <dbReference type="ChEBI" id="CHEBI:16240"/>
        <dbReference type="ChEBI" id="CHEBI:17478"/>
        <dbReference type="ChEBI" id="CHEBI:29067"/>
        <dbReference type="EC" id="1.2.3.1"/>
    </reaction>
</comment>
<comment type="catalytic activity">
    <reaction evidence="2">
        <text>retinal + O2 + H2O = retinoate + H2O2 + H(+)</text>
        <dbReference type="Rhea" id="RHEA:56736"/>
        <dbReference type="ChEBI" id="CHEBI:15035"/>
        <dbReference type="ChEBI" id="CHEBI:15036"/>
        <dbReference type="ChEBI" id="CHEBI:15377"/>
        <dbReference type="ChEBI" id="CHEBI:15378"/>
        <dbReference type="ChEBI" id="CHEBI:15379"/>
        <dbReference type="ChEBI" id="CHEBI:16240"/>
    </reaction>
</comment>
<comment type="cofactor">
    <cofactor evidence="2">
        <name>[2Fe-2S] cluster</name>
        <dbReference type="ChEBI" id="CHEBI:190135"/>
    </cofactor>
    <text evidence="2">Binds 2 [2Fe-2S] clusters per subunit.</text>
</comment>
<comment type="cofactor">
    <cofactor evidence="1">
        <name>FAD</name>
        <dbReference type="ChEBI" id="CHEBI:57692"/>
    </cofactor>
    <text evidence="2">Binds 1 FAD per subunit.</text>
</comment>
<comment type="cofactor">
    <cofactor evidence="2">
        <name>Mo-molybdopterin</name>
        <dbReference type="ChEBI" id="CHEBI:71302"/>
    </cofactor>
    <text evidence="2">Binds 1 Mo-molybdopterin (Mo-MPT) cofactor per subunit.</text>
</comment>
<comment type="subunit">
    <text evidence="2">Homodimer.</text>
</comment>
<comment type="subcellular location">
    <subcellularLocation>
        <location evidence="2">Cytoplasm</location>
    </subcellularLocation>
</comment>
<comment type="tissue specificity">
    <text evidence="6">Detected at high levels in liver, also detected in lung, kidney, lacrimal gland and olfactory mucosa.</text>
</comment>
<comment type="miscellaneous">
    <text evidence="8">AOX genes evolved from a xanthine oxidoreductase ancestral precursor via a series of gene duplication and suppression/deletion events. Different animal species contain a different complement of AOX genes encoding an equivalent number of AOX isoenzymes. In mammals, the two extremes are represented by certain rodents such as mice and rats, which are endowed with 4 AOX genes, and by humans, whose genome is characterized by a single active gene (PubMed:23263164).</text>
</comment>
<comment type="similarity">
    <text evidence="7">Belongs to the xanthine dehydrogenase family.</text>
</comment>
<sequence length="1338" mass="147691">MDRASELLFYVNGRKVIEKNVDPETMLLPYLRKKLRLTGTKYGCGGGGCGACTVMISRYNPITNRIRHHPANACLIPICSLYGTAVTTVEGIGSTHTRIHPVQERIAKCHGTQCGFCTPGMVMSIYTLLRNHPEPTLDQLTDALGGNLCRCTGYRPIIDACKTFCETSGCCQSKENGVCCLDQRINGLPEFEEGSKTSPKLFAEEEFLPLDPTQELIFPPELMIMAEKQPQRTRVFGSERMMWFSPVTLKELLEFKFKYPQAPVIMGNTSVGPQMKFKGVFHPVIISPDRIEELSVVNHTHNGLTLGAGLSLAQVKDILADVVQKLPGEKTQTYHALLKHLGTLAGSQIRNMASLGGHIISRHPDSDLNPILAVGNCTLNLLSKEGKRQIPLNEQFLSKCPNADLKPQEILVSVNIPYSRKLEFVSAFRQAQRQENALAIVNSGMRVFFGEGHGIIRELSISYGGVGPATICAKNSCQKLIGRHWNEEMLDTACRLVLEEVSLSGSAPGGRVEFKRTLIISFLFKFYLEVSQILKKMDPIRYPSLADKHESALEDLHSKHHCSTLKYQHMGPKQHPEDPIGHPIMHLSGVKHATGEAIYCDDMPLVDQELFLTFVTSSRAHAKIVSIDLSEALSMPGVVDVITAEHLSDVNSFCFFTEAEEFLATDKVFCVGQLVCAVLADSEVQAKRAAKQVKIVYQDLEPLILTIKEAIQHNSFFEPERKLEYGNVDEAFKVVDQILEGEIHMGGQEHFYMETQSMLVVPKGEDQEMDVYVSTQFPKYIQDIVASTLKLPANKVMCHVKRVGGAFGGKAFKTGVIAAVTAFAANKHGRAVRCVLERGEDMLITGGRHPYLGKYKAGFMNDGRILALDMEHYSNAGNSLDESLLVIEMGLLKMDNAYKFPNLRCRGWACRTNLPSNTAFRGFGFPQAGLITESCIMEVAAKCGLSPEKVRMINMYKEIDQTPYKQEINAKNLIQCWRECMAVSSYSLRKAAVEKFNAENYWKKKGLAMVPLKYPVGLGSRAAGQAAALVHIYLDGSVLVTHGGIEMGQGVHTKMIQVVSRELGMPISNVHLRGTSTETVPNANVSGGSVVADLNGLAVKDACQTLLKRLEPIISKNPKGTWKDWAQTAFDESISLSAVGYFRGYESDINWEKGEGHPFEYFVYGAACSEVEIDCLTGDHKNIRTDIVMDVGCSINPAIDIGQIEGAFIQGMGLYTIEELNYSPQGVLHTRGPDQYKIPAICDTPTEFHISLLPPSENSNTLYSSKGLGESGVFLGCSVFFAIHDAVSAARRERGLHGPLSLNSPLTPEKIRMACEDKFTKMIPRDEPGSCVPWNVPI</sequence>
<name>AOXA_MACFA</name>
<feature type="chain" id="PRO_0000166105" description="Aldehyde oxidase 1">
    <location>
        <begin position="1"/>
        <end position="1338"/>
    </location>
</feature>
<feature type="domain" description="2Fe-2S ferredoxin-type" evidence="4">
    <location>
        <begin position="5"/>
        <end position="92"/>
    </location>
</feature>
<feature type="domain" description="FAD-binding PCMH-type" evidence="5">
    <location>
        <begin position="236"/>
        <end position="421"/>
    </location>
</feature>
<feature type="active site" description="Proton acceptor; for azaheterocycle hydroxylase activity" evidence="3">
    <location>
        <position position="1270"/>
    </location>
</feature>
<feature type="binding site" evidence="3">
    <location>
        <position position="113"/>
    </location>
    <ligand>
        <name>Mo-molybdopterin</name>
        <dbReference type="ChEBI" id="CHEBI:71302"/>
    </ligand>
</feature>
<feature type="binding site" evidence="3">
    <location>
        <position position="151"/>
    </location>
    <ligand>
        <name>Mo-molybdopterin</name>
        <dbReference type="ChEBI" id="CHEBI:71302"/>
    </ligand>
</feature>
<feature type="binding site" evidence="3">
    <location>
        <begin position="264"/>
        <end position="271"/>
    </location>
    <ligand>
        <name>FAD</name>
        <dbReference type="ChEBI" id="CHEBI:57692"/>
    </ligand>
</feature>
<feature type="binding site" evidence="3">
    <location>
        <position position="345"/>
    </location>
    <ligand>
        <name>FAD</name>
        <dbReference type="ChEBI" id="CHEBI:57692"/>
    </ligand>
</feature>
<feature type="binding site" evidence="3">
    <location>
        <position position="354"/>
    </location>
    <ligand>
        <name>FAD</name>
        <dbReference type="ChEBI" id="CHEBI:57692"/>
    </ligand>
</feature>
<feature type="binding site" evidence="3">
    <location>
        <position position="358"/>
    </location>
    <ligand>
        <name>FAD</name>
        <dbReference type="ChEBI" id="CHEBI:57692"/>
    </ligand>
</feature>
<feature type="binding site" evidence="3">
    <location>
        <position position="367"/>
    </location>
    <ligand>
        <name>FAD</name>
        <dbReference type="ChEBI" id="CHEBI:57692"/>
    </ligand>
</feature>
<feature type="binding site" evidence="3">
    <location>
        <position position="411"/>
    </location>
    <ligand>
        <name>FAD</name>
        <dbReference type="ChEBI" id="CHEBI:57692"/>
    </ligand>
</feature>
<feature type="binding site" evidence="3">
    <location>
        <begin position="806"/>
        <end position="807"/>
    </location>
    <ligand>
        <name>Mo-molybdopterin</name>
        <dbReference type="ChEBI" id="CHEBI:71302"/>
    </ligand>
</feature>
<feature type="binding site" evidence="3">
    <location>
        <position position="1047"/>
    </location>
    <ligand>
        <name>Mo-molybdopterin</name>
        <dbReference type="ChEBI" id="CHEBI:71302"/>
    </ligand>
</feature>
<feature type="binding site" evidence="3">
    <location>
        <begin position="1088"/>
        <end position="1091"/>
    </location>
    <ligand>
        <name>Mo-molybdopterin</name>
        <dbReference type="ChEBI" id="CHEBI:71302"/>
    </ligand>
</feature>
<feature type="binding site" evidence="3">
    <location>
        <position position="1203"/>
    </location>
    <ligand>
        <name>Mo-molybdopterin</name>
        <dbReference type="ChEBI" id="CHEBI:71302"/>
    </ligand>
</feature>
<feature type="binding site" evidence="3">
    <location>
        <position position="1268"/>
    </location>
    <ligand>
        <name>Mo-molybdopterin</name>
        <dbReference type="ChEBI" id="CHEBI:71302"/>
    </ligand>
</feature>
<feature type="modified residue" description="Phosphoserine" evidence="3">
    <location>
        <position position="1068"/>
    </location>
</feature>
<feature type="sequence conflict" description="In Ref. 1; BAD89382." evidence="7" ref="1">
    <original>R</original>
    <variation>G</variation>
    <location>
        <position position="184"/>
    </location>
</feature>
<feature type="sequence conflict" description="In Ref. 1; BAD89382." evidence="7" ref="1">
    <original>M</original>
    <variation>V</variation>
    <location>
        <position position="275"/>
    </location>
</feature>
<feature type="sequence conflict" description="In Ref. 1; BAD89382." evidence="7" ref="1">
    <original>VII</original>
    <variation>GYN</variation>
    <location>
        <begin position="284"/>
        <end position="286"/>
    </location>
</feature>
<feature type="sequence conflict" description="In Ref. 1; BAD89382." evidence="7" ref="1">
    <original>LSVVNHTHN</original>
    <variation>PECCKPYTY</variation>
    <location>
        <begin position="294"/>
        <end position="302"/>
    </location>
</feature>
<feature type="sequence conflict" description="In Ref. 1; BAD89382." evidence="7" ref="1">
    <original>G</original>
    <variation>E</variation>
    <location>
        <position position="328"/>
    </location>
</feature>
<feature type="sequence conflict" description="In Ref. 1; BAD89382." evidence="7" ref="1">
    <original>R</original>
    <variation>K</variation>
    <location>
        <position position="511"/>
    </location>
</feature>
<feature type="sequence conflict" description="In Ref. 1; BAD89382." evidence="7" ref="1">
    <original>R</original>
    <variation>H</variation>
    <location>
        <position position="541"/>
    </location>
</feature>
<feature type="sequence conflict" description="In Ref. 1; BAD89382." evidence="7" ref="1">
    <original>H</original>
    <variation>Y</variation>
    <location>
        <position position="549"/>
    </location>
</feature>
<feature type="sequence conflict" description="In Ref. 1; BAD89382." evidence="7" ref="1">
    <original>L</original>
    <variation>P</variation>
    <location>
        <position position="605"/>
    </location>
</feature>
<feature type="sequence conflict" description="In Ref. 1; BAD89382." evidence="7" ref="1">
    <original>T</original>
    <variation>I</variation>
    <location>
        <position position="1105"/>
    </location>
</feature>
<feature type="sequence conflict" description="In Ref. 1; BAD89382." evidence="7" ref="1">
    <original>V</original>
    <variation>I</variation>
    <location>
        <position position="1139"/>
    </location>
</feature>
<feature type="sequence conflict" description="In Ref. 1; BAD89382." evidence="7" ref="1">
    <original>S</original>
    <variation>T</variation>
    <location>
        <position position="1301"/>
    </location>
</feature>
<feature type="sequence conflict" description="In Ref. 1; BAD89382." evidence="7" ref="1">
    <original>I</original>
    <variation>V</variation>
    <location>
        <position position="1338"/>
    </location>
</feature>
<proteinExistence type="evidence at transcript level"/>
<keyword id="KW-0001">2Fe-2S</keyword>
<keyword id="KW-0963">Cytoplasm</keyword>
<keyword id="KW-0274">FAD</keyword>
<keyword id="KW-0285">Flavoprotein</keyword>
<keyword id="KW-0408">Iron</keyword>
<keyword id="KW-0411">Iron-sulfur</keyword>
<keyword id="KW-0443">Lipid metabolism</keyword>
<keyword id="KW-0479">Metal-binding</keyword>
<keyword id="KW-0500">Molybdenum</keyword>
<keyword id="KW-0560">Oxidoreductase</keyword>
<keyword id="KW-0597">Phosphoprotein</keyword>
<keyword id="KW-1185">Reference proteome</keyword>
<gene>
    <name type="primary">AOX1</name>
</gene>
<dbReference type="EC" id="1.2.3.1" evidence="2"/>
<dbReference type="EC" id="1.17.3.-"/>
<dbReference type="EMBL" id="AB201545">
    <property type="protein sequence ID" value="BAD89382.1"/>
    <property type="molecule type" value="mRNA"/>
</dbReference>
<dbReference type="EMBL" id="FJ751935">
    <property type="protein sequence ID" value="ACQ73553.1"/>
    <property type="molecule type" value="mRNA"/>
</dbReference>
<dbReference type="RefSeq" id="NP_001271673.1">
    <property type="nucleotide sequence ID" value="NM_001284744.1"/>
</dbReference>
<dbReference type="SMR" id="Q5FB27"/>
<dbReference type="STRING" id="9541.ENSMFAP00000032049"/>
<dbReference type="BindingDB" id="Q5FB27"/>
<dbReference type="ChEMBL" id="CHEMBL1641357"/>
<dbReference type="eggNOG" id="KOG0430">
    <property type="taxonomic scope" value="Eukaryota"/>
</dbReference>
<dbReference type="BRENDA" id="1.2.3.1">
    <property type="organism ID" value="1793"/>
</dbReference>
<dbReference type="SABIO-RK" id="Q5FB27"/>
<dbReference type="PRO" id="PR:Q5FB27"/>
<dbReference type="Proteomes" id="UP000233100">
    <property type="component" value="Unplaced"/>
</dbReference>
<dbReference type="GO" id="GO:0005737">
    <property type="term" value="C:cytoplasm"/>
    <property type="evidence" value="ECO:0007669"/>
    <property type="project" value="UniProtKB-SubCell"/>
</dbReference>
<dbReference type="GO" id="GO:0051537">
    <property type="term" value="F:2 iron, 2 sulfur cluster binding"/>
    <property type="evidence" value="ECO:0007669"/>
    <property type="project" value="UniProtKB-KW"/>
</dbReference>
<dbReference type="GO" id="GO:0004031">
    <property type="term" value="F:aldehyde oxidase activity"/>
    <property type="evidence" value="ECO:0007669"/>
    <property type="project" value="UniProtKB-EC"/>
</dbReference>
<dbReference type="GO" id="GO:0071949">
    <property type="term" value="F:FAD binding"/>
    <property type="evidence" value="ECO:0007669"/>
    <property type="project" value="InterPro"/>
</dbReference>
<dbReference type="GO" id="GO:0005506">
    <property type="term" value="F:iron ion binding"/>
    <property type="evidence" value="ECO:0007669"/>
    <property type="project" value="InterPro"/>
</dbReference>
<dbReference type="GO" id="GO:0043546">
    <property type="term" value="F:molybdopterin cofactor binding"/>
    <property type="evidence" value="ECO:0007669"/>
    <property type="project" value="InterPro"/>
</dbReference>
<dbReference type="GO" id="GO:0051287">
    <property type="term" value="F:NAD binding"/>
    <property type="evidence" value="ECO:0007669"/>
    <property type="project" value="InterPro"/>
</dbReference>
<dbReference type="GO" id="GO:0006629">
    <property type="term" value="P:lipid metabolic process"/>
    <property type="evidence" value="ECO:0007669"/>
    <property type="project" value="UniProtKB-KW"/>
</dbReference>
<dbReference type="FunFam" id="1.10.150.120:FF:000001">
    <property type="entry name" value="Aldehyde oxidase 1"/>
    <property type="match status" value="1"/>
</dbReference>
<dbReference type="FunFam" id="3.10.20.30:FF:000015">
    <property type="entry name" value="Aldehyde oxidase 1"/>
    <property type="match status" value="1"/>
</dbReference>
<dbReference type="FunFam" id="3.30.365.10:FF:000003">
    <property type="entry name" value="Aldehyde oxidase 1"/>
    <property type="match status" value="1"/>
</dbReference>
<dbReference type="FunFam" id="3.90.1170.50:FF:000001">
    <property type="entry name" value="Aldehyde oxidase 1"/>
    <property type="match status" value="1"/>
</dbReference>
<dbReference type="FunFam" id="3.30.365.10:FF:000004">
    <property type="entry name" value="Xanthine dehydrogenase oxidase"/>
    <property type="match status" value="1"/>
</dbReference>
<dbReference type="FunFam" id="3.30.390.50:FF:000001">
    <property type="entry name" value="Xanthine dehydrogenase oxidase"/>
    <property type="match status" value="1"/>
</dbReference>
<dbReference type="FunFam" id="3.30.43.10:FF:000001">
    <property type="entry name" value="Xanthine dehydrogenase/oxidase"/>
    <property type="match status" value="1"/>
</dbReference>
<dbReference type="FunFam" id="3.30.465.10:FF:000004">
    <property type="entry name" value="Xanthine dehydrogenase/oxidase"/>
    <property type="match status" value="1"/>
</dbReference>
<dbReference type="Gene3D" id="3.10.20.30">
    <property type="match status" value="1"/>
</dbReference>
<dbReference type="Gene3D" id="3.30.465.10">
    <property type="match status" value="1"/>
</dbReference>
<dbReference type="Gene3D" id="1.10.150.120">
    <property type="entry name" value="[2Fe-2S]-binding domain"/>
    <property type="match status" value="1"/>
</dbReference>
<dbReference type="Gene3D" id="3.90.1170.50">
    <property type="entry name" value="Aldehyde oxidase/xanthine dehydrogenase, a/b hammerhead"/>
    <property type="match status" value="1"/>
</dbReference>
<dbReference type="Gene3D" id="3.30.365.10">
    <property type="entry name" value="Aldehyde oxidase/xanthine dehydrogenase, molybdopterin binding domain"/>
    <property type="match status" value="4"/>
</dbReference>
<dbReference type="Gene3D" id="3.30.390.50">
    <property type="entry name" value="CO dehydrogenase flavoprotein, C-terminal domain"/>
    <property type="match status" value="1"/>
</dbReference>
<dbReference type="Gene3D" id="3.30.43.10">
    <property type="entry name" value="Uridine Diphospho-n-acetylenolpyruvylglucosamine Reductase, domain 2"/>
    <property type="match status" value="1"/>
</dbReference>
<dbReference type="InterPro" id="IPR002888">
    <property type="entry name" value="2Fe-2S-bd"/>
</dbReference>
<dbReference type="InterPro" id="IPR036884">
    <property type="entry name" value="2Fe-2S-bd_dom_sf"/>
</dbReference>
<dbReference type="InterPro" id="IPR036010">
    <property type="entry name" value="2Fe-2S_ferredoxin-like_sf"/>
</dbReference>
<dbReference type="InterPro" id="IPR001041">
    <property type="entry name" value="2Fe-2S_ferredoxin-type"/>
</dbReference>
<dbReference type="InterPro" id="IPR006058">
    <property type="entry name" value="2Fe2S_fd_BS"/>
</dbReference>
<dbReference type="InterPro" id="IPR000674">
    <property type="entry name" value="Ald_Oxase/Xan_DH_a/b"/>
</dbReference>
<dbReference type="InterPro" id="IPR036856">
    <property type="entry name" value="Ald_Oxase/Xan_DH_a/b_sf"/>
</dbReference>
<dbReference type="InterPro" id="IPR016208">
    <property type="entry name" value="Ald_Oxase/xanthine_DH-like"/>
</dbReference>
<dbReference type="InterPro" id="IPR014313">
    <property type="entry name" value="Aldehyde_oxidase"/>
</dbReference>
<dbReference type="InterPro" id="IPR008274">
    <property type="entry name" value="AldOxase/xan_DH_MoCoBD1"/>
</dbReference>
<dbReference type="InterPro" id="IPR046867">
    <property type="entry name" value="AldOxase/xan_DH_MoCoBD2"/>
</dbReference>
<dbReference type="InterPro" id="IPR037165">
    <property type="entry name" value="AldOxase/xan_DH_Mopterin-bd_sf"/>
</dbReference>
<dbReference type="InterPro" id="IPR012675">
    <property type="entry name" value="Beta-grasp_dom_sf"/>
</dbReference>
<dbReference type="InterPro" id="IPR005107">
    <property type="entry name" value="CO_DH_flav_C"/>
</dbReference>
<dbReference type="InterPro" id="IPR036683">
    <property type="entry name" value="CO_DH_flav_C_dom_sf"/>
</dbReference>
<dbReference type="InterPro" id="IPR016166">
    <property type="entry name" value="FAD-bd_PCMH"/>
</dbReference>
<dbReference type="InterPro" id="IPR036318">
    <property type="entry name" value="FAD-bd_PCMH-like_sf"/>
</dbReference>
<dbReference type="InterPro" id="IPR016167">
    <property type="entry name" value="FAD-bd_PCMH_sub1"/>
</dbReference>
<dbReference type="InterPro" id="IPR016169">
    <property type="entry name" value="FAD-bd_PCMH_sub2"/>
</dbReference>
<dbReference type="InterPro" id="IPR002346">
    <property type="entry name" value="Mopterin_DH_FAD-bd"/>
</dbReference>
<dbReference type="InterPro" id="IPR022407">
    <property type="entry name" value="OxRdtase_Mopterin_BS"/>
</dbReference>
<dbReference type="NCBIfam" id="TIGR02969">
    <property type="entry name" value="mam_aldehyde_ox"/>
    <property type="match status" value="1"/>
</dbReference>
<dbReference type="PANTHER" id="PTHR45444">
    <property type="entry name" value="XANTHINE DEHYDROGENASE"/>
    <property type="match status" value="1"/>
</dbReference>
<dbReference type="PANTHER" id="PTHR45444:SF3">
    <property type="entry name" value="XANTHINE DEHYDROGENASE"/>
    <property type="match status" value="1"/>
</dbReference>
<dbReference type="Pfam" id="PF01315">
    <property type="entry name" value="Ald_Xan_dh_C"/>
    <property type="match status" value="1"/>
</dbReference>
<dbReference type="Pfam" id="PF03450">
    <property type="entry name" value="CO_deh_flav_C"/>
    <property type="match status" value="1"/>
</dbReference>
<dbReference type="Pfam" id="PF00941">
    <property type="entry name" value="FAD_binding_5"/>
    <property type="match status" value="1"/>
</dbReference>
<dbReference type="Pfam" id="PF00111">
    <property type="entry name" value="Fer2"/>
    <property type="match status" value="1"/>
</dbReference>
<dbReference type="Pfam" id="PF01799">
    <property type="entry name" value="Fer2_2"/>
    <property type="match status" value="1"/>
</dbReference>
<dbReference type="Pfam" id="PF02738">
    <property type="entry name" value="MoCoBD_1"/>
    <property type="match status" value="1"/>
</dbReference>
<dbReference type="Pfam" id="PF20256">
    <property type="entry name" value="MoCoBD_2"/>
    <property type="match status" value="1"/>
</dbReference>
<dbReference type="PIRSF" id="PIRSF000127">
    <property type="entry name" value="Xanthine_DH"/>
    <property type="match status" value="1"/>
</dbReference>
<dbReference type="SMART" id="SM01008">
    <property type="entry name" value="Ald_Xan_dh_C"/>
    <property type="match status" value="1"/>
</dbReference>
<dbReference type="SMART" id="SM01092">
    <property type="entry name" value="CO_deh_flav_C"/>
    <property type="match status" value="1"/>
</dbReference>
<dbReference type="SUPFAM" id="SSF54292">
    <property type="entry name" value="2Fe-2S ferredoxin-like"/>
    <property type="match status" value="1"/>
</dbReference>
<dbReference type="SUPFAM" id="SSF55447">
    <property type="entry name" value="CO dehydrogenase flavoprotein C-terminal domain-like"/>
    <property type="match status" value="1"/>
</dbReference>
<dbReference type="SUPFAM" id="SSF47741">
    <property type="entry name" value="CO dehydrogenase ISP C-domain like"/>
    <property type="match status" value="1"/>
</dbReference>
<dbReference type="SUPFAM" id="SSF54665">
    <property type="entry name" value="CO dehydrogenase molybdoprotein N-domain-like"/>
    <property type="match status" value="1"/>
</dbReference>
<dbReference type="SUPFAM" id="SSF56176">
    <property type="entry name" value="FAD-binding/transporter-associated domain-like"/>
    <property type="match status" value="1"/>
</dbReference>
<dbReference type="SUPFAM" id="SSF56003">
    <property type="entry name" value="Molybdenum cofactor-binding domain"/>
    <property type="match status" value="1"/>
</dbReference>
<dbReference type="PROSITE" id="PS00197">
    <property type="entry name" value="2FE2S_FER_1"/>
    <property type="match status" value="1"/>
</dbReference>
<dbReference type="PROSITE" id="PS51085">
    <property type="entry name" value="2FE2S_FER_2"/>
    <property type="match status" value="1"/>
</dbReference>
<dbReference type="PROSITE" id="PS51387">
    <property type="entry name" value="FAD_PCMH"/>
    <property type="match status" value="1"/>
</dbReference>
<dbReference type="PROSITE" id="PS00559">
    <property type="entry name" value="MOLYBDOPTERIN_EUK"/>
    <property type="match status" value="1"/>
</dbReference>
<organism>
    <name type="scientific">Macaca fascicularis</name>
    <name type="common">Crab-eating macaque</name>
    <name type="synonym">Cynomolgus monkey</name>
    <dbReference type="NCBI Taxonomy" id="9541"/>
    <lineage>
        <taxon>Eukaryota</taxon>
        <taxon>Metazoa</taxon>
        <taxon>Chordata</taxon>
        <taxon>Craniata</taxon>
        <taxon>Vertebrata</taxon>
        <taxon>Euteleostomi</taxon>
        <taxon>Mammalia</taxon>
        <taxon>Eutheria</taxon>
        <taxon>Euarchontoglires</taxon>
        <taxon>Primates</taxon>
        <taxon>Haplorrhini</taxon>
        <taxon>Catarrhini</taxon>
        <taxon>Cercopithecidae</taxon>
        <taxon>Cercopithecinae</taxon>
        <taxon>Macaca</taxon>
    </lineage>
</organism>